<dbReference type="EMBL" id="AE009439">
    <property type="protein sequence ID" value="AAM01933.1"/>
    <property type="molecule type" value="Genomic_DNA"/>
</dbReference>
<dbReference type="RefSeq" id="WP_011019088.1">
    <property type="nucleotide sequence ID" value="NC_003551.1"/>
</dbReference>
<dbReference type="SMR" id="Q8TXF5"/>
<dbReference type="STRING" id="190192.MK0719"/>
<dbReference type="PaxDb" id="190192-MK0719"/>
<dbReference type="EnsemblBacteria" id="AAM01933">
    <property type="protein sequence ID" value="AAM01933"/>
    <property type="gene ID" value="MK0719"/>
</dbReference>
<dbReference type="GeneID" id="1476820"/>
<dbReference type="KEGG" id="mka:MK0719"/>
<dbReference type="PATRIC" id="fig|190192.8.peg.760"/>
<dbReference type="HOGENOM" id="CLU_361186_0_0_2"/>
<dbReference type="InParanoid" id="Q8TXF5"/>
<dbReference type="OrthoDB" id="375051at2157"/>
<dbReference type="Proteomes" id="UP000001826">
    <property type="component" value="Chromosome"/>
</dbReference>
<dbReference type="GO" id="GO:0050418">
    <property type="term" value="F:hydroxylamine reductase activity"/>
    <property type="evidence" value="ECO:0007669"/>
    <property type="project" value="TreeGrafter"/>
</dbReference>
<dbReference type="GO" id="GO:0051536">
    <property type="term" value="F:iron-sulfur cluster binding"/>
    <property type="evidence" value="ECO:0007669"/>
    <property type="project" value="UniProtKB-KW"/>
</dbReference>
<dbReference type="GO" id="GO:0046872">
    <property type="term" value="F:metal ion binding"/>
    <property type="evidence" value="ECO:0007669"/>
    <property type="project" value="UniProtKB-KW"/>
</dbReference>
<dbReference type="GO" id="GO:0004601">
    <property type="term" value="F:peroxidase activity"/>
    <property type="evidence" value="ECO:0007669"/>
    <property type="project" value="TreeGrafter"/>
</dbReference>
<dbReference type="GO" id="GO:0042542">
    <property type="term" value="P:response to hydrogen peroxide"/>
    <property type="evidence" value="ECO:0007669"/>
    <property type="project" value="TreeGrafter"/>
</dbReference>
<dbReference type="Gene3D" id="3.40.50.2030">
    <property type="match status" value="2"/>
</dbReference>
<dbReference type="InterPro" id="IPR004137">
    <property type="entry name" value="HCP/CODH"/>
</dbReference>
<dbReference type="InterPro" id="IPR016099">
    <property type="entry name" value="Prismane-like_a/b-sand"/>
</dbReference>
<dbReference type="InterPro" id="IPR011254">
    <property type="entry name" value="Prismane-like_sf"/>
</dbReference>
<dbReference type="PANTHER" id="PTHR30109:SF6">
    <property type="entry name" value="ACETYL-COA DECARBONYLASE_SYNTHASE COMPLEX SUBUNIT ALPHA"/>
    <property type="match status" value="1"/>
</dbReference>
<dbReference type="PANTHER" id="PTHR30109">
    <property type="entry name" value="HYDROXYLAMINE REDUCTASE"/>
    <property type="match status" value="1"/>
</dbReference>
<dbReference type="Pfam" id="PF03063">
    <property type="entry name" value="Prismane"/>
    <property type="match status" value="1"/>
</dbReference>
<dbReference type="SUPFAM" id="SSF56821">
    <property type="entry name" value="Prismane protein-like"/>
    <property type="match status" value="1"/>
</dbReference>
<gene>
    <name type="primary">cdhA2</name>
    <name type="ordered locus">MK0719</name>
</gene>
<evidence type="ECO:0000255" key="1">
    <source>
        <dbReference type="HAMAP-Rule" id="MF_01137"/>
    </source>
</evidence>
<evidence type="ECO:0000305" key="2"/>
<protein>
    <recommendedName>
        <fullName>Putative acetyl-CoA decarbonylase/synthase complex subunit alpha-like</fullName>
        <shortName>ACDS complex subunit alpha-like</shortName>
    </recommendedName>
    <alternativeName>
        <fullName>ACDS complex carbon monoxide dehydrogenase subunit alpha-like</fullName>
        <shortName>ACDS CODH subunit alpha-like</shortName>
    </alternativeName>
</protein>
<feature type="chain" id="PRO_0000155079" description="Putative acetyl-CoA decarbonylase/synthase complex subunit alpha-like">
    <location>
        <begin position="1"/>
        <end position="632"/>
    </location>
</feature>
<feature type="binding site" evidence="1">
    <location>
        <position position="200"/>
    </location>
    <ligand>
        <name>[Ni-4Fe-4S] cluster</name>
        <dbReference type="ChEBI" id="CHEBI:47739"/>
    </ligand>
</feature>
<feature type="binding site" evidence="2">
    <location>
        <position position="226"/>
    </location>
    <ligand>
        <name>[Ni-4Fe-4S] cluster</name>
        <dbReference type="ChEBI" id="CHEBI:47739"/>
    </ligand>
</feature>
<feature type="binding site" evidence="1">
    <location>
        <position position="263"/>
    </location>
    <ligand>
        <name>[Ni-4Fe-4S] cluster</name>
        <dbReference type="ChEBI" id="CHEBI:47739"/>
    </ligand>
</feature>
<feature type="binding site" evidence="1">
    <location>
        <position position="379"/>
    </location>
    <ligand>
        <name>[Ni-4Fe-4S] cluster</name>
        <dbReference type="ChEBI" id="CHEBI:47739"/>
    </ligand>
</feature>
<feature type="binding site" evidence="1">
    <location>
        <position position="408"/>
    </location>
    <ligand>
        <name>[Ni-4Fe-4S] cluster</name>
        <dbReference type="ChEBI" id="CHEBI:47739"/>
    </ligand>
</feature>
<feature type="binding site" evidence="1">
    <location>
        <position position="438"/>
    </location>
    <ligand>
        <name>[Ni-4Fe-4S] cluster</name>
        <dbReference type="ChEBI" id="CHEBI:47739"/>
    </ligand>
</feature>
<name>ACDA2_METKA</name>
<reference key="1">
    <citation type="journal article" date="2002" name="Proc. Natl. Acad. Sci. U.S.A.">
        <title>The complete genome of hyperthermophile Methanopyrus kandleri AV19 and monophyly of archaeal methanogens.</title>
        <authorList>
            <person name="Slesarev A.I."/>
            <person name="Mezhevaya K.V."/>
            <person name="Makarova K.S."/>
            <person name="Polushin N.N."/>
            <person name="Shcherbinina O.V."/>
            <person name="Shakhova V.V."/>
            <person name="Belova G.I."/>
            <person name="Aravind L."/>
            <person name="Natale D.A."/>
            <person name="Rogozin I.B."/>
            <person name="Tatusov R.L."/>
            <person name="Wolf Y.I."/>
            <person name="Stetter K.O."/>
            <person name="Malykh A.G."/>
            <person name="Koonin E.V."/>
            <person name="Kozyavkin S.A."/>
        </authorList>
    </citation>
    <scope>NUCLEOTIDE SEQUENCE [LARGE SCALE GENOMIC DNA]</scope>
    <source>
        <strain>AV19 / DSM 6324 / JCM 9639 / NBRC 100938</strain>
    </source>
</reference>
<accession>Q8TXF5</accession>
<proteinExistence type="inferred from homology"/>
<keyword id="KW-0408">Iron</keyword>
<keyword id="KW-0411">Iron-sulfur</keyword>
<keyword id="KW-0479">Metal-binding</keyword>
<keyword id="KW-0533">Nickel</keyword>
<keyword id="KW-1185">Reference proteome</keyword>
<comment type="function">
    <text evidence="1">Part of the ACDS complex that catalyzes the reversible cleavage of acetyl-CoA, allowing autotrophic growth from CO(2). The alpha-epsilon subcomponent functions as a carbon monoxide dehydrogenase.</text>
</comment>
<comment type="similarity">
    <text evidence="1">Belongs to the Ni-containing carbon monoxide dehydrogenase family.</text>
</comment>
<comment type="caution">
    <text evidence="2">This protein lacks several conserved Cys residues that bind [4Fe-4S] clusters in other CODHs. Therefore, it is not clear whether this protein is active. However, the protein would be able to bind a [Ni-4Fe-4S] cluster, which is the active site of CO oxidation.</text>
</comment>
<organism>
    <name type="scientific">Methanopyrus kandleri (strain AV19 / DSM 6324 / JCM 9639 / NBRC 100938)</name>
    <dbReference type="NCBI Taxonomy" id="190192"/>
    <lineage>
        <taxon>Archaea</taxon>
        <taxon>Methanobacteriati</taxon>
        <taxon>Methanobacteriota</taxon>
        <taxon>Methanomada group</taxon>
        <taxon>Methanopyri</taxon>
        <taxon>Methanopyrales</taxon>
        <taxon>Methanopyraceae</taxon>
        <taxon>Methanopyrus</taxon>
    </lineage>
</organism>
<sequence>MGIEWEGVKVEIGELVVEGDSESEMEGPTRRELLPWDRTLASVYDLAVVPGDSEEERREVARTIVTLCCEGTAGLISTARLVVELLRQTGENLDPGFDAETPLPLYETLLGSSPECADDLEAGLSYAERELTSSVSELLRSHSLKGYESVAMHAGAIGLLAMEIADATPSTLMEVTESEEVFEIGTDDLPRRPTVLLVGHLPLLGHIITEELGTLARQVELVGLTHTAWPNREDHVRVVGPLSMYHEYLSSGFADVVVVDGACPGEDVIEAAREGGSKLVATVGARVADLLDVTDYPVEEAVEVLVTEEDAVYVEEPIKAVEIAAWAALRVEGSRDRREPPRRAFRVGPPTRLTDVVIRNVGVPVVAGNIPGIVVLVSCPEKSADVEEPAKIAEVLLERGYLVLVPGCLAVALGSYLDDDGKTLYERYPDTLLNTGPCTSAAHLVGACIRVGVIFGKLPIRGEFVRVADYVLNRVGACVIAWGGEYSEHLVSAAYGVTRWGIPVVLGPDPEAGSLLVEKNPKVIDACSGEEVEDPTPEHLRCVVSDWKEAAITAARLCMRPNDTPEGRQNKVESYVELYRELYGELPPDLDLLIRDESDIPVTLRSEIRELLEETGWTPRSRASDPTLLPEG</sequence>